<feature type="chain" id="PRO_1000005282" description="Small ribosomal subunit protein bS6">
    <location>
        <begin position="1"/>
        <end position="98"/>
    </location>
</feature>
<sequence length="98" mass="11572">MAETKYEVTYIIRPDLDDAAKTELVERFDNILKENGANIIDSKDWQKRKLAYEINKYNEGLYHIVNLSAEDDKAINEFDRLGKINNDILRHMIVKRED</sequence>
<gene>
    <name evidence="1" type="primary">rpsF</name>
    <name type="ordered locus">LSEI_0009</name>
</gene>
<dbReference type="EMBL" id="CP000423">
    <property type="protein sequence ID" value="ABJ68875.1"/>
    <property type="molecule type" value="Genomic_DNA"/>
</dbReference>
<dbReference type="RefSeq" id="WP_003568460.1">
    <property type="nucleotide sequence ID" value="NC_008526.1"/>
</dbReference>
<dbReference type="RefSeq" id="YP_805317.1">
    <property type="nucleotide sequence ID" value="NC_008526.1"/>
</dbReference>
<dbReference type="SMR" id="Q03D47"/>
<dbReference type="STRING" id="321967.LSEI_0009"/>
<dbReference type="PaxDb" id="321967-LSEI_0009"/>
<dbReference type="GeneID" id="57088755"/>
<dbReference type="KEGG" id="lca:LSEI_0009"/>
<dbReference type="PATRIC" id="fig|321967.11.peg.44"/>
<dbReference type="HOGENOM" id="CLU_113441_5_3_9"/>
<dbReference type="Proteomes" id="UP000001651">
    <property type="component" value="Chromosome"/>
</dbReference>
<dbReference type="GO" id="GO:0005737">
    <property type="term" value="C:cytoplasm"/>
    <property type="evidence" value="ECO:0007669"/>
    <property type="project" value="UniProtKB-ARBA"/>
</dbReference>
<dbReference type="GO" id="GO:1990904">
    <property type="term" value="C:ribonucleoprotein complex"/>
    <property type="evidence" value="ECO:0007669"/>
    <property type="project" value="UniProtKB-KW"/>
</dbReference>
<dbReference type="GO" id="GO:0005840">
    <property type="term" value="C:ribosome"/>
    <property type="evidence" value="ECO:0007669"/>
    <property type="project" value="UniProtKB-KW"/>
</dbReference>
<dbReference type="GO" id="GO:0070181">
    <property type="term" value="F:small ribosomal subunit rRNA binding"/>
    <property type="evidence" value="ECO:0007669"/>
    <property type="project" value="TreeGrafter"/>
</dbReference>
<dbReference type="GO" id="GO:0003735">
    <property type="term" value="F:structural constituent of ribosome"/>
    <property type="evidence" value="ECO:0007669"/>
    <property type="project" value="InterPro"/>
</dbReference>
<dbReference type="GO" id="GO:0006412">
    <property type="term" value="P:translation"/>
    <property type="evidence" value="ECO:0007669"/>
    <property type="project" value="UniProtKB-UniRule"/>
</dbReference>
<dbReference type="CDD" id="cd00473">
    <property type="entry name" value="bS6"/>
    <property type="match status" value="1"/>
</dbReference>
<dbReference type="FunFam" id="3.30.70.60:FF:000002">
    <property type="entry name" value="30S ribosomal protein S6"/>
    <property type="match status" value="1"/>
</dbReference>
<dbReference type="Gene3D" id="3.30.70.60">
    <property type="match status" value="1"/>
</dbReference>
<dbReference type="HAMAP" id="MF_00360">
    <property type="entry name" value="Ribosomal_bS6"/>
    <property type="match status" value="1"/>
</dbReference>
<dbReference type="InterPro" id="IPR000529">
    <property type="entry name" value="Ribosomal_bS6"/>
</dbReference>
<dbReference type="InterPro" id="IPR035980">
    <property type="entry name" value="Ribosomal_bS6_sf"/>
</dbReference>
<dbReference type="InterPro" id="IPR020814">
    <property type="entry name" value="Ribosomal_S6_plastid/chlpt"/>
</dbReference>
<dbReference type="InterPro" id="IPR014717">
    <property type="entry name" value="Transl_elong_EF1B/ribsomal_bS6"/>
</dbReference>
<dbReference type="NCBIfam" id="TIGR00166">
    <property type="entry name" value="S6"/>
    <property type="match status" value="1"/>
</dbReference>
<dbReference type="PANTHER" id="PTHR21011">
    <property type="entry name" value="MITOCHONDRIAL 28S RIBOSOMAL PROTEIN S6"/>
    <property type="match status" value="1"/>
</dbReference>
<dbReference type="PANTHER" id="PTHR21011:SF1">
    <property type="entry name" value="SMALL RIBOSOMAL SUBUNIT PROTEIN BS6M"/>
    <property type="match status" value="1"/>
</dbReference>
<dbReference type="Pfam" id="PF01250">
    <property type="entry name" value="Ribosomal_S6"/>
    <property type="match status" value="1"/>
</dbReference>
<dbReference type="SUPFAM" id="SSF54995">
    <property type="entry name" value="Ribosomal protein S6"/>
    <property type="match status" value="1"/>
</dbReference>
<accession>Q03D47</accession>
<reference key="1">
    <citation type="journal article" date="2006" name="Proc. Natl. Acad. Sci. U.S.A.">
        <title>Comparative genomics of the lactic acid bacteria.</title>
        <authorList>
            <person name="Makarova K.S."/>
            <person name="Slesarev A."/>
            <person name="Wolf Y.I."/>
            <person name="Sorokin A."/>
            <person name="Mirkin B."/>
            <person name="Koonin E.V."/>
            <person name="Pavlov A."/>
            <person name="Pavlova N."/>
            <person name="Karamychev V."/>
            <person name="Polouchine N."/>
            <person name="Shakhova V."/>
            <person name="Grigoriev I."/>
            <person name="Lou Y."/>
            <person name="Rohksar D."/>
            <person name="Lucas S."/>
            <person name="Huang K."/>
            <person name="Goodstein D.M."/>
            <person name="Hawkins T."/>
            <person name="Plengvidhya V."/>
            <person name="Welker D."/>
            <person name="Hughes J."/>
            <person name="Goh Y."/>
            <person name="Benson A."/>
            <person name="Baldwin K."/>
            <person name="Lee J.-H."/>
            <person name="Diaz-Muniz I."/>
            <person name="Dosti B."/>
            <person name="Smeianov V."/>
            <person name="Wechter W."/>
            <person name="Barabote R."/>
            <person name="Lorca G."/>
            <person name="Altermann E."/>
            <person name="Barrangou R."/>
            <person name="Ganesan B."/>
            <person name="Xie Y."/>
            <person name="Rawsthorne H."/>
            <person name="Tamir D."/>
            <person name="Parker C."/>
            <person name="Breidt F."/>
            <person name="Broadbent J.R."/>
            <person name="Hutkins R."/>
            <person name="O'Sullivan D."/>
            <person name="Steele J."/>
            <person name="Unlu G."/>
            <person name="Saier M.H. Jr."/>
            <person name="Klaenhammer T."/>
            <person name="Richardson P."/>
            <person name="Kozyavkin S."/>
            <person name="Weimer B.C."/>
            <person name="Mills D.A."/>
        </authorList>
    </citation>
    <scope>NUCLEOTIDE SEQUENCE [LARGE SCALE GENOMIC DNA]</scope>
    <source>
        <strain>ATCC 334 / BCRC 17002 / CCUG 31169 / CIP 107868 / KCTC 3260 / NRRL B-441</strain>
    </source>
</reference>
<evidence type="ECO:0000255" key="1">
    <source>
        <dbReference type="HAMAP-Rule" id="MF_00360"/>
    </source>
</evidence>
<evidence type="ECO:0000305" key="2"/>
<organism>
    <name type="scientific">Lacticaseibacillus paracasei (strain ATCC 334 / BCRC 17002 / CCUG 31169 / CIP 107868 / KCTC 3260 / NRRL B-441)</name>
    <name type="common">Lactobacillus paracasei</name>
    <dbReference type="NCBI Taxonomy" id="321967"/>
    <lineage>
        <taxon>Bacteria</taxon>
        <taxon>Bacillati</taxon>
        <taxon>Bacillota</taxon>
        <taxon>Bacilli</taxon>
        <taxon>Lactobacillales</taxon>
        <taxon>Lactobacillaceae</taxon>
        <taxon>Lacticaseibacillus</taxon>
    </lineage>
</organism>
<keyword id="KW-1185">Reference proteome</keyword>
<keyword id="KW-0687">Ribonucleoprotein</keyword>
<keyword id="KW-0689">Ribosomal protein</keyword>
<keyword id="KW-0694">RNA-binding</keyword>
<keyword id="KW-0699">rRNA-binding</keyword>
<proteinExistence type="inferred from homology"/>
<comment type="function">
    <text evidence="1">Binds together with bS18 to 16S ribosomal RNA.</text>
</comment>
<comment type="similarity">
    <text evidence="1">Belongs to the bacterial ribosomal protein bS6 family.</text>
</comment>
<protein>
    <recommendedName>
        <fullName evidence="1">Small ribosomal subunit protein bS6</fullName>
    </recommendedName>
    <alternativeName>
        <fullName evidence="2">30S ribosomal protein S6</fullName>
    </alternativeName>
</protein>
<name>RS6_LACP3</name>